<evidence type="ECO:0000250" key="1">
    <source>
        <dbReference type="UniProtKB" id="O85042"/>
    </source>
</evidence>
<evidence type="ECO:0000256" key="2">
    <source>
        <dbReference type="SAM" id="MobiDB-lite"/>
    </source>
</evidence>
<evidence type="ECO:0000269" key="3">
    <source>
    </source>
</evidence>
<evidence type="ECO:0000303" key="4">
    <source>
    </source>
</evidence>
<evidence type="ECO:0000305" key="5"/>
<evidence type="ECO:0000305" key="6">
    <source>
    </source>
</evidence>
<gene>
    <name evidence="4" type="primary">csoS3</name>
    <name type="ordered locus">PMT_1202</name>
</gene>
<keyword id="KW-1283">Bacterial microcompartment</keyword>
<keyword id="KW-0120">Carbon dioxide fixation</keyword>
<keyword id="KW-1282">Carboxysome</keyword>
<keyword id="KW-0456">Lyase</keyword>
<keyword id="KW-0479">Metal-binding</keyword>
<keyword id="KW-0602">Photosynthesis</keyword>
<keyword id="KW-1185">Reference proteome</keyword>
<keyword id="KW-0862">Zinc</keyword>
<dbReference type="EC" id="4.2.1.1" evidence="3"/>
<dbReference type="EMBL" id="BX548175">
    <property type="protein sequence ID" value="CAE21377.1"/>
    <property type="molecule type" value="Genomic_DNA"/>
</dbReference>
<dbReference type="RefSeq" id="WP_011130573.1">
    <property type="nucleotide sequence ID" value="NC_005071.1"/>
</dbReference>
<dbReference type="SMR" id="Q7V6G1"/>
<dbReference type="KEGG" id="pmt:PMT_1202"/>
<dbReference type="eggNOG" id="ENOG502Z9V7">
    <property type="taxonomic scope" value="Bacteria"/>
</dbReference>
<dbReference type="HOGENOM" id="CLU_535194_0_0_3"/>
<dbReference type="OrthoDB" id="544846at2"/>
<dbReference type="Proteomes" id="UP000001423">
    <property type="component" value="Chromosome"/>
</dbReference>
<dbReference type="GO" id="GO:0031470">
    <property type="term" value="C:carboxysome"/>
    <property type="evidence" value="ECO:0007669"/>
    <property type="project" value="UniProtKB-SubCell"/>
</dbReference>
<dbReference type="GO" id="GO:0004089">
    <property type="term" value="F:carbonate dehydratase activity"/>
    <property type="evidence" value="ECO:0007669"/>
    <property type="project" value="UniProtKB-EC"/>
</dbReference>
<dbReference type="GO" id="GO:0046872">
    <property type="term" value="F:metal ion binding"/>
    <property type="evidence" value="ECO:0007669"/>
    <property type="project" value="UniProtKB-KW"/>
</dbReference>
<dbReference type="GO" id="GO:0015977">
    <property type="term" value="P:carbon fixation"/>
    <property type="evidence" value="ECO:0007669"/>
    <property type="project" value="UniProtKB-KW"/>
</dbReference>
<dbReference type="GO" id="GO:0015979">
    <property type="term" value="P:photosynthesis"/>
    <property type="evidence" value="ECO:0007669"/>
    <property type="project" value="UniProtKB-KW"/>
</dbReference>
<dbReference type="Gene3D" id="3.30.1330.140">
    <property type="entry name" value="Carboxysome Shell Carbonic Anhydrase, C-terminal domain"/>
    <property type="match status" value="1"/>
</dbReference>
<dbReference type="Gene3D" id="1.20.120.1310">
    <property type="entry name" value="Carboxysome Shell Carbonic Anhydrase, N-terminal helical domain"/>
    <property type="match status" value="1"/>
</dbReference>
<dbReference type="InterPro" id="IPR014074">
    <property type="entry name" value="Carboxysome_shell_carb_anhy"/>
</dbReference>
<dbReference type="InterPro" id="IPR048620">
    <property type="entry name" value="CsoSCA_C"/>
</dbReference>
<dbReference type="InterPro" id="IPR043066">
    <property type="entry name" value="CsoSCA_C_sf"/>
</dbReference>
<dbReference type="InterPro" id="IPR048539">
    <property type="entry name" value="CsoSCA_cat"/>
</dbReference>
<dbReference type="InterPro" id="IPR048619">
    <property type="entry name" value="CsoSCA_N"/>
</dbReference>
<dbReference type="InterPro" id="IPR043065">
    <property type="entry name" value="CsoSCA_N_sf"/>
</dbReference>
<dbReference type="NCBIfam" id="TIGR02701">
    <property type="entry name" value="shell_carb_anhy"/>
    <property type="match status" value="1"/>
</dbReference>
<dbReference type="Pfam" id="PF08936">
    <property type="entry name" value="CsoSCA_C"/>
    <property type="match status" value="1"/>
</dbReference>
<dbReference type="Pfam" id="PF20686">
    <property type="entry name" value="CsoSCA_cat"/>
    <property type="match status" value="1"/>
</dbReference>
<dbReference type="Pfam" id="PF20687">
    <property type="entry name" value="CsoSCA_N"/>
    <property type="match status" value="1"/>
</dbReference>
<accession>Q7V6G1</accession>
<proteinExistence type="evidence at protein level"/>
<sequence length="514" mass="57266">MAYRNRNLASQTQRPLAPTAPRRRPVVTPQISDRSRLRGFANVGSGPCHPLTDRAANQHLQTYEANVKGSFELIVPFLKRISALQHDQDFVSKCQSLARSELGFDLPSHLLEQAWVRALDMRALFAWCVFQSHQHVSDHFFQEDPLQGGEGSIQAKHFQSFLVDCGFHLLDVSPCADGRLAHTIAYALRIPFSSVRRRSHAGALFDVEKTVNRWIKTEHRRYREGVPNSADSPTRYLKVVTYHFSSLDPSHQGCAAHGSDDALAASAGQQRLLDFRESVENSFCCGASVDLLLIGLDTDTDAIRVHVPAADGSIVLDEWLSAEDLYHETLSLTSDEAMQHIAERVEAIAPKKPDEGMVAFIVKLIANNFSQIDYVKQSHAGPYPDAGHAERFIGVGIGFKEVHLRNLTYFAHLDTVEVGAPDLDVGVKIFKGLNVSRDLPIPVVVRFDYSGQVPGARDRAVTDCYRVNQAIAERYSELFDQGLLHTFLTIRDRDKKDTSEVVGSSLEPVHQEAH</sequence>
<feature type="chain" id="PRO_0000452064" description="Carboxysome shell carbonic anhydrase">
    <location>
        <begin position="1"/>
        <end position="514"/>
    </location>
</feature>
<feature type="region of interest" description="Disordered" evidence="2">
    <location>
        <begin position="1"/>
        <end position="27"/>
    </location>
</feature>
<feature type="active site" description="Proton acceptor" evidence="1">
    <location>
        <position position="177"/>
    </location>
</feature>
<feature type="binding site" evidence="1">
    <location>
        <position position="175"/>
    </location>
    <ligand>
        <name>Zn(2+)</name>
        <dbReference type="ChEBI" id="CHEBI:29105"/>
        <note>catalytic</note>
    </ligand>
</feature>
<feature type="binding site" evidence="1">
    <location>
        <position position="243"/>
    </location>
    <ligand>
        <name>Zn(2+)</name>
        <dbReference type="ChEBI" id="CHEBI:29105"/>
        <note>catalytic</note>
    </ligand>
</feature>
<feature type="binding site" evidence="1">
    <location>
        <position position="254"/>
    </location>
    <ligand>
        <name>Zn(2+)</name>
        <dbReference type="ChEBI" id="CHEBI:29105"/>
        <note>catalytic</note>
    </ligand>
</feature>
<comment type="function">
    <text evidence="3 6">Reversible hydration of carbon dioxide (PubMed:14729686). Essential for photosynthetic carbon dioxide fixation, supplies CO(2) to RuBisCO (ribulose bisphosphate carboxylase, cbbL-cbbS) in the carboxysome (Probable).</text>
</comment>
<comment type="catalytic activity">
    <reaction evidence="3">
        <text>hydrogencarbonate + H(+) = CO2 + H2O</text>
        <dbReference type="Rhea" id="RHEA:10748"/>
        <dbReference type="ChEBI" id="CHEBI:15377"/>
        <dbReference type="ChEBI" id="CHEBI:15378"/>
        <dbReference type="ChEBI" id="CHEBI:16526"/>
        <dbReference type="ChEBI" id="CHEBI:17544"/>
        <dbReference type="EC" id="4.2.1.1"/>
    </reaction>
</comment>
<comment type="cofactor">
    <cofactor evidence="1">
        <name>Zn(2+)</name>
        <dbReference type="ChEBI" id="CHEBI:29105"/>
    </cofactor>
    <text evidence="1">Binds 1 Zn(2+) per monomer.</text>
</comment>
<comment type="subunit">
    <text evidence="1">Homodimer.</text>
</comment>
<comment type="subcellular location">
    <subcellularLocation>
        <location evidence="6">Carboxysome</location>
    </subcellularLocation>
    <text evidence="5">This cyanobacterium makes alpha-type carboxysomes.</text>
</comment>
<comment type="similarity">
    <text evidence="6">Belongs to the beta-class carbonic anhydrase family. CsoSCA subfamily.</text>
</comment>
<organism>
    <name type="scientific">Prochlorococcus marinus (strain MIT 9313)</name>
    <dbReference type="NCBI Taxonomy" id="74547"/>
    <lineage>
        <taxon>Bacteria</taxon>
        <taxon>Bacillati</taxon>
        <taxon>Cyanobacteriota</taxon>
        <taxon>Cyanophyceae</taxon>
        <taxon>Synechococcales</taxon>
        <taxon>Prochlorococcaceae</taxon>
        <taxon>Prochlorococcus</taxon>
    </lineage>
</organism>
<name>CSOCA_PROMM</name>
<protein>
    <recommendedName>
        <fullName evidence="4">Carboxysome shell carbonic anhydrase</fullName>
        <shortName evidence="5">CsoSCA</shortName>
        <ecNumber evidence="3">4.2.1.1</ecNumber>
    </recommendedName>
    <alternativeName>
        <fullName evidence="4">Carbonic anhydrase</fullName>
        <shortName evidence="4">CA</shortName>
    </alternativeName>
    <alternativeName>
        <fullName>Carboxysome shell protein CsoS3</fullName>
    </alternativeName>
</protein>
<reference key="1">
    <citation type="journal article" date="2003" name="Nature">
        <title>Genome divergence in two Prochlorococcus ecotypes reflects oceanic niche differentiation.</title>
        <authorList>
            <person name="Rocap G."/>
            <person name="Larimer F.W."/>
            <person name="Lamerdin J.E."/>
            <person name="Malfatti S."/>
            <person name="Chain P."/>
            <person name="Ahlgren N.A."/>
            <person name="Arellano A."/>
            <person name="Coleman M."/>
            <person name="Hauser L."/>
            <person name="Hess W.R."/>
            <person name="Johnson Z.I."/>
            <person name="Land M.L."/>
            <person name="Lindell D."/>
            <person name="Post A.F."/>
            <person name="Regala W."/>
            <person name="Shah M."/>
            <person name="Shaw S.L."/>
            <person name="Steglich C."/>
            <person name="Sullivan M.B."/>
            <person name="Ting C.S."/>
            <person name="Tolonen A."/>
            <person name="Webb E.A."/>
            <person name="Zinser E.R."/>
            <person name="Chisholm S.W."/>
        </authorList>
    </citation>
    <scope>NUCLEOTIDE SEQUENCE [LARGE SCALE GENOMIC DNA]</scope>
    <source>
        <strain>MIT 9313</strain>
    </source>
</reference>
<reference key="2">
    <citation type="journal article" date="2004" name="J. Bacteriol.">
        <title>A novel evolutionary lineage of carbonic anhydrase (epsilon class) is a component of the carboxysome shell.</title>
        <authorList>
            <person name="So A.K."/>
            <person name="Espie G.S."/>
            <person name="Williams E.B."/>
            <person name="Shively J.M."/>
            <person name="Heinhorst S."/>
            <person name="Cannon G.C."/>
        </authorList>
    </citation>
    <scope>FUNCTION AS A CARBONIC ANHYDRASE</scope>
    <scope>CATALYTIC ACTIVITY</scope>
    <source>
        <strain>MIT 9313</strain>
    </source>
</reference>